<sequence length="301" mass="33290">MKIGVIMGGISSEREISLQSGKSIIENINKEKYEVLPIVIDKKEDIINKSKGIDFALLALHGQFGEDGTVQSVLQTLGIPYSGCGPLSSAMCMDKDVSKSVLEANGIRTAPWINLRKGDNIDFNKINELGYPVVVKPTHGGSSVATFIVKEEKEIENCVSEAFKWDSEVMIEKFIKGDEITCPVYNNKMLPVIAIKPKAEFFDFTSKYQDGGAEEIVVELEAELHKEVEKMALETYKALKCEVYSRVDMIVTEEGVPYILEINTLPGMTKNSLIPKSAAALNIGFSELIDMIIQDSLKISR</sequence>
<organism>
    <name type="scientific">Clostridium beijerinckii (strain ATCC 51743 / NCIMB 8052)</name>
    <name type="common">Clostridium acetobutylicum</name>
    <dbReference type="NCBI Taxonomy" id="290402"/>
    <lineage>
        <taxon>Bacteria</taxon>
        <taxon>Bacillati</taxon>
        <taxon>Bacillota</taxon>
        <taxon>Clostridia</taxon>
        <taxon>Eubacteriales</taxon>
        <taxon>Clostridiaceae</taxon>
        <taxon>Clostridium</taxon>
    </lineage>
</organism>
<proteinExistence type="inferred from homology"/>
<evidence type="ECO:0000250" key="1"/>
<evidence type="ECO:0000255" key="2">
    <source>
        <dbReference type="HAMAP-Rule" id="MF_00047"/>
    </source>
</evidence>
<dbReference type="EC" id="6.3.2.4" evidence="2"/>
<dbReference type="EMBL" id="CP000721">
    <property type="protein sequence ID" value="ABR32768.1"/>
    <property type="molecule type" value="Genomic_DNA"/>
</dbReference>
<dbReference type="RefSeq" id="WP_011967929.1">
    <property type="nucleotide sequence ID" value="NC_009617.1"/>
</dbReference>
<dbReference type="SMR" id="A6LQY8"/>
<dbReference type="KEGG" id="cbe:Cbei_0581"/>
<dbReference type="eggNOG" id="COG1181">
    <property type="taxonomic scope" value="Bacteria"/>
</dbReference>
<dbReference type="HOGENOM" id="CLU_039268_1_1_9"/>
<dbReference type="UniPathway" id="UPA00219"/>
<dbReference type="Proteomes" id="UP000000565">
    <property type="component" value="Chromosome"/>
</dbReference>
<dbReference type="GO" id="GO:0005737">
    <property type="term" value="C:cytoplasm"/>
    <property type="evidence" value="ECO:0007669"/>
    <property type="project" value="UniProtKB-SubCell"/>
</dbReference>
<dbReference type="GO" id="GO:0005524">
    <property type="term" value="F:ATP binding"/>
    <property type="evidence" value="ECO:0007669"/>
    <property type="project" value="UniProtKB-KW"/>
</dbReference>
<dbReference type="GO" id="GO:0008716">
    <property type="term" value="F:D-alanine-D-alanine ligase activity"/>
    <property type="evidence" value="ECO:0007669"/>
    <property type="project" value="UniProtKB-UniRule"/>
</dbReference>
<dbReference type="GO" id="GO:0046872">
    <property type="term" value="F:metal ion binding"/>
    <property type="evidence" value="ECO:0007669"/>
    <property type="project" value="UniProtKB-KW"/>
</dbReference>
<dbReference type="GO" id="GO:0071555">
    <property type="term" value="P:cell wall organization"/>
    <property type="evidence" value="ECO:0007669"/>
    <property type="project" value="UniProtKB-KW"/>
</dbReference>
<dbReference type="GO" id="GO:0009252">
    <property type="term" value="P:peptidoglycan biosynthetic process"/>
    <property type="evidence" value="ECO:0007669"/>
    <property type="project" value="UniProtKB-UniRule"/>
</dbReference>
<dbReference type="GO" id="GO:0008360">
    <property type="term" value="P:regulation of cell shape"/>
    <property type="evidence" value="ECO:0007669"/>
    <property type="project" value="UniProtKB-KW"/>
</dbReference>
<dbReference type="FunFam" id="3.40.50.20:FF:000031">
    <property type="entry name" value="D-alanine--D-alanine ligase"/>
    <property type="match status" value="1"/>
</dbReference>
<dbReference type="Gene3D" id="3.40.50.20">
    <property type="match status" value="1"/>
</dbReference>
<dbReference type="Gene3D" id="3.30.1490.20">
    <property type="entry name" value="ATP-grasp fold, A domain"/>
    <property type="match status" value="1"/>
</dbReference>
<dbReference type="Gene3D" id="3.30.470.20">
    <property type="entry name" value="ATP-grasp fold, B domain"/>
    <property type="match status" value="1"/>
</dbReference>
<dbReference type="HAMAP" id="MF_00047">
    <property type="entry name" value="Dala_Dala_lig"/>
    <property type="match status" value="1"/>
</dbReference>
<dbReference type="InterPro" id="IPR011761">
    <property type="entry name" value="ATP-grasp"/>
</dbReference>
<dbReference type="InterPro" id="IPR013815">
    <property type="entry name" value="ATP_grasp_subdomain_1"/>
</dbReference>
<dbReference type="InterPro" id="IPR000291">
    <property type="entry name" value="D-Ala_lig_Van_CS"/>
</dbReference>
<dbReference type="InterPro" id="IPR005905">
    <property type="entry name" value="D_ala_D_ala"/>
</dbReference>
<dbReference type="InterPro" id="IPR011095">
    <property type="entry name" value="Dala_Dala_lig_C"/>
</dbReference>
<dbReference type="InterPro" id="IPR011127">
    <property type="entry name" value="Dala_Dala_lig_N"/>
</dbReference>
<dbReference type="InterPro" id="IPR016185">
    <property type="entry name" value="PreATP-grasp_dom_sf"/>
</dbReference>
<dbReference type="NCBIfam" id="TIGR01205">
    <property type="entry name" value="D_ala_D_alaTIGR"/>
    <property type="match status" value="1"/>
</dbReference>
<dbReference type="NCBIfam" id="NF002378">
    <property type="entry name" value="PRK01372.1"/>
    <property type="match status" value="1"/>
</dbReference>
<dbReference type="PANTHER" id="PTHR23132">
    <property type="entry name" value="D-ALANINE--D-ALANINE LIGASE"/>
    <property type="match status" value="1"/>
</dbReference>
<dbReference type="PANTHER" id="PTHR23132:SF23">
    <property type="entry name" value="D-ALANINE--D-ALANINE LIGASE B"/>
    <property type="match status" value="1"/>
</dbReference>
<dbReference type="Pfam" id="PF07478">
    <property type="entry name" value="Dala_Dala_lig_C"/>
    <property type="match status" value="1"/>
</dbReference>
<dbReference type="Pfam" id="PF01820">
    <property type="entry name" value="Dala_Dala_lig_N"/>
    <property type="match status" value="2"/>
</dbReference>
<dbReference type="PIRSF" id="PIRSF039102">
    <property type="entry name" value="Ddl/VanB"/>
    <property type="match status" value="1"/>
</dbReference>
<dbReference type="SMART" id="SM01209">
    <property type="entry name" value="GARS_A"/>
    <property type="match status" value="1"/>
</dbReference>
<dbReference type="SUPFAM" id="SSF56059">
    <property type="entry name" value="Glutathione synthetase ATP-binding domain-like"/>
    <property type="match status" value="1"/>
</dbReference>
<dbReference type="SUPFAM" id="SSF52440">
    <property type="entry name" value="PreATP-grasp domain"/>
    <property type="match status" value="1"/>
</dbReference>
<dbReference type="PROSITE" id="PS50975">
    <property type="entry name" value="ATP_GRASP"/>
    <property type="match status" value="1"/>
</dbReference>
<dbReference type="PROSITE" id="PS00843">
    <property type="entry name" value="DALA_DALA_LIGASE_1"/>
    <property type="match status" value="1"/>
</dbReference>
<dbReference type="PROSITE" id="PS00844">
    <property type="entry name" value="DALA_DALA_LIGASE_2"/>
    <property type="match status" value="1"/>
</dbReference>
<accession>A6LQY8</accession>
<protein>
    <recommendedName>
        <fullName evidence="2">D-alanine--D-alanine ligase</fullName>
        <ecNumber evidence="2">6.3.2.4</ecNumber>
    </recommendedName>
    <alternativeName>
        <fullName evidence="2">D-Ala-D-Ala ligase</fullName>
    </alternativeName>
    <alternativeName>
        <fullName evidence="2">D-alanylalanine synthetase</fullName>
    </alternativeName>
</protein>
<gene>
    <name evidence="2" type="primary">ddl</name>
    <name type="ordered locus">Cbei_0581</name>
</gene>
<comment type="function">
    <text evidence="2">Cell wall formation.</text>
</comment>
<comment type="catalytic activity">
    <reaction evidence="2">
        <text>2 D-alanine + ATP = D-alanyl-D-alanine + ADP + phosphate + H(+)</text>
        <dbReference type="Rhea" id="RHEA:11224"/>
        <dbReference type="ChEBI" id="CHEBI:15378"/>
        <dbReference type="ChEBI" id="CHEBI:30616"/>
        <dbReference type="ChEBI" id="CHEBI:43474"/>
        <dbReference type="ChEBI" id="CHEBI:57416"/>
        <dbReference type="ChEBI" id="CHEBI:57822"/>
        <dbReference type="ChEBI" id="CHEBI:456216"/>
        <dbReference type="EC" id="6.3.2.4"/>
    </reaction>
</comment>
<comment type="cofactor">
    <cofactor evidence="1">
        <name>Mg(2+)</name>
        <dbReference type="ChEBI" id="CHEBI:18420"/>
    </cofactor>
    <cofactor evidence="1">
        <name>Mn(2+)</name>
        <dbReference type="ChEBI" id="CHEBI:29035"/>
    </cofactor>
    <text evidence="1">Binds 2 magnesium or manganese ions per subunit.</text>
</comment>
<comment type="pathway">
    <text evidence="2">Cell wall biogenesis; peptidoglycan biosynthesis.</text>
</comment>
<comment type="subcellular location">
    <subcellularLocation>
        <location evidence="2">Cytoplasm</location>
    </subcellularLocation>
</comment>
<comment type="similarity">
    <text evidence="2">Belongs to the D-alanine--D-alanine ligase family.</text>
</comment>
<feature type="chain" id="PRO_1000074769" description="D-alanine--D-alanine ligase">
    <location>
        <begin position="1"/>
        <end position="301"/>
    </location>
</feature>
<feature type="domain" description="ATP-grasp" evidence="2">
    <location>
        <begin position="99"/>
        <end position="294"/>
    </location>
</feature>
<feature type="binding site" evidence="2">
    <location>
        <begin position="126"/>
        <end position="181"/>
    </location>
    <ligand>
        <name>ATP</name>
        <dbReference type="ChEBI" id="CHEBI:30616"/>
    </ligand>
</feature>
<feature type="binding site" evidence="2">
    <location>
        <position position="248"/>
    </location>
    <ligand>
        <name>Mg(2+)</name>
        <dbReference type="ChEBI" id="CHEBI:18420"/>
        <label>1</label>
    </ligand>
</feature>
<feature type="binding site" evidence="2">
    <location>
        <position position="261"/>
    </location>
    <ligand>
        <name>Mg(2+)</name>
        <dbReference type="ChEBI" id="CHEBI:18420"/>
        <label>1</label>
    </ligand>
</feature>
<feature type="binding site" evidence="2">
    <location>
        <position position="261"/>
    </location>
    <ligand>
        <name>Mg(2+)</name>
        <dbReference type="ChEBI" id="CHEBI:18420"/>
        <label>2</label>
    </ligand>
</feature>
<feature type="binding site" evidence="2">
    <location>
        <position position="263"/>
    </location>
    <ligand>
        <name>Mg(2+)</name>
        <dbReference type="ChEBI" id="CHEBI:18420"/>
        <label>2</label>
    </ligand>
</feature>
<keyword id="KW-0067">ATP-binding</keyword>
<keyword id="KW-0133">Cell shape</keyword>
<keyword id="KW-0961">Cell wall biogenesis/degradation</keyword>
<keyword id="KW-0963">Cytoplasm</keyword>
<keyword id="KW-0436">Ligase</keyword>
<keyword id="KW-0460">Magnesium</keyword>
<keyword id="KW-0464">Manganese</keyword>
<keyword id="KW-0479">Metal-binding</keyword>
<keyword id="KW-0547">Nucleotide-binding</keyword>
<keyword id="KW-0573">Peptidoglycan synthesis</keyword>
<name>DDL_CLOB8</name>
<reference key="1">
    <citation type="submission" date="2007-06" db="EMBL/GenBank/DDBJ databases">
        <title>Complete sequence of Clostridium beijerinckii NCIMB 8052.</title>
        <authorList>
            <consortium name="US DOE Joint Genome Institute"/>
            <person name="Copeland A."/>
            <person name="Lucas S."/>
            <person name="Lapidus A."/>
            <person name="Barry K."/>
            <person name="Detter J.C."/>
            <person name="Glavina del Rio T."/>
            <person name="Hammon N."/>
            <person name="Israni S."/>
            <person name="Dalin E."/>
            <person name="Tice H."/>
            <person name="Pitluck S."/>
            <person name="Sims D."/>
            <person name="Brettin T."/>
            <person name="Bruce D."/>
            <person name="Tapia R."/>
            <person name="Brainard J."/>
            <person name="Schmutz J."/>
            <person name="Larimer F."/>
            <person name="Land M."/>
            <person name="Hauser L."/>
            <person name="Kyrpides N."/>
            <person name="Mikhailova N."/>
            <person name="Bennet G."/>
            <person name="Cann I."/>
            <person name="Chen J.-S."/>
            <person name="Contreras A.L."/>
            <person name="Jones D."/>
            <person name="Kashket E."/>
            <person name="Mitchell W."/>
            <person name="Stoddard S."/>
            <person name="Schwarz W."/>
            <person name="Qureshi N."/>
            <person name="Young M."/>
            <person name="Shi Z."/>
            <person name="Ezeji T."/>
            <person name="White B."/>
            <person name="Blaschek H."/>
            <person name="Richardson P."/>
        </authorList>
    </citation>
    <scope>NUCLEOTIDE SEQUENCE [LARGE SCALE GENOMIC DNA]</scope>
    <source>
        <strain>ATCC 51743 / NCIMB 8052</strain>
    </source>
</reference>